<keyword id="KW-0547">Nucleotide-binding</keyword>
<accession>A5UIG4</accession>
<proteinExistence type="inferred from homology"/>
<name>Y8790_HAEIG</name>
<reference key="1">
    <citation type="journal article" date="2007" name="Genome Biol.">
        <title>Characterization and modeling of the Haemophilus influenzae core and supragenomes based on the complete genomic sequences of Rd and 12 clinical nontypeable strains.</title>
        <authorList>
            <person name="Hogg J.S."/>
            <person name="Hu F.Z."/>
            <person name="Janto B."/>
            <person name="Boissy R."/>
            <person name="Hayes J."/>
            <person name="Keefe R."/>
            <person name="Post J.C."/>
            <person name="Ehrlich G.D."/>
        </authorList>
    </citation>
    <scope>NUCLEOTIDE SEQUENCE [LARGE SCALE GENOMIC DNA]</scope>
    <source>
        <strain>PittGG</strain>
    </source>
</reference>
<feature type="chain" id="PRO_1000051731" description="Nucleotide-binding protein CGSHiGG_08790">
    <location>
        <begin position="1"/>
        <end position="163"/>
    </location>
</feature>
<organism>
    <name type="scientific">Haemophilus influenzae (strain PittGG)</name>
    <dbReference type="NCBI Taxonomy" id="374931"/>
    <lineage>
        <taxon>Bacteria</taxon>
        <taxon>Pseudomonadati</taxon>
        <taxon>Pseudomonadota</taxon>
        <taxon>Gammaproteobacteria</taxon>
        <taxon>Pasteurellales</taxon>
        <taxon>Pasteurellaceae</taxon>
        <taxon>Haemophilus</taxon>
    </lineage>
</organism>
<gene>
    <name type="ordered locus">CGSHiGG_08790</name>
</gene>
<dbReference type="EMBL" id="CP000672">
    <property type="protein sequence ID" value="ABR00570.1"/>
    <property type="molecule type" value="Genomic_DNA"/>
</dbReference>
<dbReference type="SMR" id="A5UIG4"/>
<dbReference type="KEGG" id="hiq:CGSHiGG_08790"/>
<dbReference type="HOGENOM" id="CLU_099839_1_0_6"/>
<dbReference type="Proteomes" id="UP000001990">
    <property type="component" value="Chromosome"/>
</dbReference>
<dbReference type="GO" id="GO:0005829">
    <property type="term" value="C:cytosol"/>
    <property type="evidence" value="ECO:0007669"/>
    <property type="project" value="TreeGrafter"/>
</dbReference>
<dbReference type="GO" id="GO:0000166">
    <property type="term" value="F:nucleotide binding"/>
    <property type="evidence" value="ECO:0007669"/>
    <property type="project" value="TreeGrafter"/>
</dbReference>
<dbReference type="CDD" id="cd11740">
    <property type="entry name" value="YajQ_like"/>
    <property type="match status" value="1"/>
</dbReference>
<dbReference type="FunFam" id="3.30.70.860:FF:000001">
    <property type="entry name" value="UPF0234 protein YajQ"/>
    <property type="match status" value="1"/>
</dbReference>
<dbReference type="FunFam" id="3.30.70.990:FF:000001">
    <property type="entry name" value="UPF0234 protein YajQ"/>
    <property type="match status" value="1"/>
</dbReference>
<dbReference type="Gene3D" id="3.30.70.860">
    <property type="match status" value="1"/>
</dbReference>
<dbReference type="Gene3D" id="3.30.70.990">
    <property type="entry name" value="YajQ-like, domain 2"/>
    <property type="match status" value="1"/>
</dbReference>
<dbReference type="HAMAP" id="MF_00632">
    <property type="entry name" value="YajQ"/>
    <property type="match status" value="1"/>
</dbReference>
<dbReference type="InterPro" id="IPR007551">
    <property type="entry name" value="DUF520"/>
</dbReference>
<dbReference type="InterPro" id="IPR035571">
    <property type="entry name" value="UPF0234-like_C"/>
</dbReference>
<dbReference type="InterPro" id="IPR035570">
    <property type="entry name" value="UPF0234_N"/>
</dbReference>
<dbReference type="InterPro" id="IPR036183">
    <property type="entry name" value="YajQ-like_sf"/>
</dbReference>
<dbReference type="NCBIfam" id="NF003819">
    <property type="entry name" value="PRK05412.1"/>
    <property type="match status" value="1"/>
</dbReference>
<dbReference type="PANTHER" id="PTHR30476">
    <property type="entry name" value="UPF0234 PROTEIN YAJQ"/>
    <property type="match status" value="1"/>
</dbReference>
<dbReference type="PANTHER" id="PTHR30476:SF0">
    <property type="entry name" value="UPF0234 PROTEIN YAJQ"/>
    <property type="match status" value="1"/>
</dbReference>
<dbReference type="Pfam" id="PF04461">
    <property type="entry name" value="DUF520"/>
    <property type="match status" value="1"/>
</dbReference>
<dbReference type="SUPFAM" id="SSF89963">
    <property type="entry name" value="YajQ-like"/>
    <property type="match status" value="2"/>
</dbReference>
<evidence type="ECO:0000255" key="1">
    <source>
        <dbReference type="HAMAP-Rule" id="MF_00632"/>
    </source>
</evidence>
<protein>
    <recommendedName>
        <fullName evidence="1">Nucleotide-binding protein CGSHiGG_08790</fullName>
    </recommendedName>
</protein>
<comment type="function">
    <text evidence="1">Nucleotide-binding protein.</text>
</comment>
<comment type="similarity">
    <text evidence="1">Belongs to the YajQ family.</text>
</comment>
<sequence length="163" mass="18505">MPSFDIVSEITLHEVRNAVENANRVLSTRYDFRGVEAVIELNEKNETIKITTESDFQLEQLIEILIGACIKRGIEHSSLDIPAESEHHGKLYSKEIKLKQGIETEMAKKITKLVKDSKIKVQTQIQGEQVRVTGKSRDDLQAVIQLVKGAELGQPFQFNNFRD</sequence>